<dbReference type="EMBL" id="AF222894">
    <property type="protein sequence ID" value="AAF30818.1"/>
    <property type="molecule type" value="Genomic_DNA"/>
</dbReference>
<dbReference type="RefSeq" id="WP_006689084.1">
    <property type="nucleotide sequence ID" value="NC_002162.1"/>
</dbReference>
<dbReference type="SMR" id="Q9PQ82"/>
<dbReference type="STRING" id="273119.UU407"/>
<dbReference type="EnsemblBacteria" id="AAF30818">
    <property type="protein sequence ID" value="AAF30818"/>
    <property type="gene ID" value="UU407"/>
</dbReference>
<dbReference type="GeneID" id="29672368"/>
<dbReference type="KEGG" id="uur:UU407"/>
<dbReference type="eggNOG" id="COG0484">
    <property type="taxonomic scope" value="Bacteria"/>
</dbReference>
<dbReference type="HOGENOM" id="CLU_017633_0_7_14"/>
<dbReference type="OrthoDB" id="9779889at2"/>
<dbReference type="Proteomes" id="UP000000423">
    <property type="component" value="Chromosome"/>
</dbReference>
<dbReference type="GO" id="GO:0005737">
    <property type="term" value="C:cytoplasm"/>
    <property type="evidence" value="ECO:0007669"/>
    <property type="project" value="UniProtKB-SubCell"/>
</dbReference>
<dbReference type="GO" id="GO:0005524">
    <property type="term" value="F:ATP binding"/>
    <property type="evidence" value="ECO:0007669"/>
    <property type="project" value="InterPro"/>
</dbReference>
<dbReference type="GO" id="GO:0031072">
    <property type="term" value="F:heat shock protein binding"/>
    <property type="evidence" value="ECO:0007669"/>
    <property type="project" value="InterPro"/>
</dbReference>
<dbReference type="GO" id="GO:0051082">
    <property type="term" value="F:unfolded protein binding"/>
    <property type="evidence" value="ECO:0007669"/>
    <property type="project" value="UniProtKB-UniRule"/>
</dbReference>
<dbReference type="GO" id="GO:0008270">
    <property type="term" value="F:zinc ion binding"/>
    <property type="evidence" value="ECO:0007669"/>
    <property type="project" value="UniProtKB-UniRule"/>
</dbReference>
<dbReference type="GO" id="GO:0051085">
    <property type="term" value="P:chaperone cofactor-dependent protein refolding"/>
    <property type="evidence" value="ECO:0007669"/>
    <property type="project" value="TreeGrafter"/>
</dbReference>
<dbReference type="GO" id="GO:0006260">
    <property type="term" value="P:DNA replication"/>
    <property type="evidence" value="ECO:0007669"/>
    <property type="project" value="UniProtKB-KW"/>
</dbReference>
<dbReference type="GO" id="GO:0042026">
    <property type="term" value="P:protein refolding"/>
    <property type="evidence" value="ECO:0007669"/>
    <property type="project" value="TreeGrafter"/>
</dbReference>
<dbReference type="GO" id="GO:0009408">
    <property type="term" value="P:response to heat"/>
    <property type="evidence" value="ECO:0007669"/>
    <property type="project" value="InterPro"/>
</dbReference>
<dbReference type="CDD" id="cd06257">
    <property type="entry name" value="DnaJ"/>
    <property type="match status" value="1"/>
</dbReference>
<dbReference type="CDD" id="cd10747">
    <property type="entry name" value="DnaJ_C"/>
    <property type="match status" value="1"/>
</dbReference>
<dbReference type="CDD" id="cd10719">
    <property type="entry name" value="DnaJ_zf"/>
    <property type="match status" value="1"/>
</dbReference>
<dbReference type="FunFam" id="2.10.230.10:FF:000002">
    <property type="entry name" value="Molecular chaperone DnaJ"/>
    <property type="match status" value="1"/>
</dbReference>
<dbReference type="Gene3D" id="1.10.287.110">
    <property type="entry name" value="DnaJ domain"/>
    <property type="match status" value="1"/>
</dbReference>
<dbReference type="Gene3D" id="2.10.230.10">
    <property type="entry name" value="Heat shock protein DnaJ, cysteine-rich domain"/>
    <property type="match status" value="1"/>
</dbReference>
<dbReference type="Gene3D" id="2.60.260.20">
    <property type="entry name" value="Urease metallochaperone UreE, N-terminal domain"/>
    <property type="match status" value="2"/>
</dbReference>
<dbReference type="HAMAP" id="MF_01152">
    <property type="entry name" value="DnaJ"/>
    <property type="match status" value="1"/>
</dbReference>
<dbReference type="InterPro" id="IPR012724">
    <property type="entry name" value="DnaJ"/>
</dbReference>
<dbReference type="InterPro" id="IPR002939">
    <property type="entry name" value="DnaJ_C"/>
</dbReference>
<dbReference type="InterPro" id="IPR001623">
    <property type="entry name" value="DnaJ_domain"/>
</dbReference>
<dbReference type="InterPro" id="IPR018253">
    <property type="entry name" value="DnaJ_domain_CS"/>
</dbReference>
<dbReference type="InterPro" id="IPR008971">
    <property type="entry name" value="HSP40/DnaJ_pept-bd"/>
</dbReference>
<dbReference type="InterPro" id="IPR001305">
    <property type="entry name" value="HSP_DnaJ_Cys-rich_dom"/>
</dbReference>
<dbReference type="InterPro" id="IPR036410">
    <property type="entry name" value="HSP_DnaJ_Cys-rich_dom_sf"/>
</dbReference>
<dbReference type="InterPro" id="IPR036869">
    <property type="entry name" value="J_dom_sf"/>
</dbReference>
<dbReference type="NCBIfam" id="TIGR02349">
    <property type="entry name" value="DnaJ_bact"/>
    <property type="match status" value="1"/>
</dbReference>
<dbReference type="PANTHER" id="PTHR43096:SF48">
    <property type="entry name" value="CHAPERONE PROTEIN DNAJ"/>
    <property type="match status" value="1"/>
</dbReference>
<dbReference type="PANTHER" id="PTHR43096">
    <property type="entry name" value="DNAJ HOMOLOG 1, MITOCHONDRIAL-RELATED"/>
    <property type="match status" value="1"/>
</dbReference>
<dbReference type="Pfam" id="PF00226">
    <property type="entry name" value="DnaJ"/>
    <property type="match status" value="1"/>
</dbReference>
<dbReference type="Pfam" id="PF01556">
    <property type="entry name" value="DnaJ_C"/>
    <property type="match status" value="1"/>
</dbReference>
<dbReference type="Pfam" id="PF00684">
    <property type="entry name" value="DnaJ_CXXCXGXG"/>
    <property type="match status" value="1"/>
</dbReference>
<dbReference type="PRINTS" id="PR00625">
    <property type="entry name" value="JDOMAIN"/>
</dbReference>
<dbReference type="SMART" id="SM00271">
    <property type="entry name" value="DnaJ"/>
    <property type="match status" value="1"/>
</dbReference>
<dbReference type="SUPFAM" id="SSF46565">
    <property type="entry name" value="Chaperone J-domain"/>
    <property type="match status" value="1"/>
</dbReference>
<dbReference type="SUPFAM" id="SSF57938">
    <property type="entry name" value="DnaJ/Hsp40 cysteine-rich domain"/>
    <property type="match status" value="1"/>
</dbReference>
<dbReference type="SUPFAM" id="SSF49493">
    <property type="entry name" value="HSP40/DnaJ peptide-binding domain"/>
    <property type="match status" value="2"/>
</dbReference>
<dbReference type="PROSITE" id="PS00636">
    <property type="entry name" value="DNAJ_1"/>
    <property type="match status" value="1"/>
</dbReference>
<dbReference type="PROSITE" id="PS50076">
    <property type="entry name" value="DNAJ_2"/>
    <property type="match status" value="1"/>
</dbReference>
<dbReference type="PROSITE" id="PS51188">
    <property type="entry name" value="ZF_CR"/>
    <property type="match status" value="1"/>
</dbReference>
<gene>
    <name evidence="1" type="primary">dnaJ</name>
    <name type="ordered locus">UU407</name>
</gene>
<reference key="1">
    <citation type="journal article" date="2000" name="Nature">
        <title>The complete sequence of the mucosal pathogen Ureaplasma urealyticum.</title>
        <authorList>
            <person name="Glass J.I."/>
            <person name="Lefkowitz E.J."/>
            <person name="Glass J.S."/>
            <person name="Heiner C.R."/>
            <person name="Chen E.Y."/>
            <person name="Cassell G.H."/>
        </authorList>
    </citation>
    <scope>NUCLEOTIDE SEQUENCE [LARGE SCALE GENOMIC DNA]</scope>
    <source>
        <strain>ATCC 700970</strain>
    </source>
</reference>
<evidence type="ECO:0000255" key="1">
    <source>
        <dbReference type="HAMAP-Rule" id="MF_01152"/>
    </source>
</evidence>
<sequence>MAKRDYYEILGVSKSATPEEIKAAFRKLAKEHHPDRNKSADDTLFKEINEAYEVLSDSKKRAQYDQFGHDGPQGFSSASGFSGFSGGFGGVDFDINDIFGSFFNNASSSHNSSNQYETYDIHLRLHLDFMEAVNGISKNINYDRKITCHKCQGTGAKDPKDVKICTKCHGRGTSIENVHSLFGTIQQEVECHECEGTGKVASSKCEQCYGKKVINERVNLTVEIPAGTREGEKLLVSKKGNIVNNQEFDLYLHISVKPSKYFALDGLDIYSETYIDPIKAIVGGIIEVVTINGIKTIEIPSNTPEGKKFRISGSGIVNKKSNIFGKKNGDFYTTIRYAKPVELSKDEIAYLKNISTRTNQNVEYYKNKVLKEISK</sequence>
<keyword id="KW-0143">Chaperone</keyword>
<keyword id="KW-0963">Cytoplasm</keyword>
<keyword id="KW-0235">DNA replication</keyword>
<keyword id="KW-0479">Metal-binding</keyword>
<keyword id="KW-1185">Reference proteome</keyword>
<keyword id="KW-0677">Repeat</keyword>
<keyword id="KW-0346">Stress response</keyword>
<keyword id="KW-0862">Zinc</keyword>
<keyword id="KW-0863">Zinc-finger</keyword>
<organism>
    <name type="scientific">Ureaplasma parvum serovar 3 (strain ATCC 700970)</name>
    <dbReference type="NCBI Taxonomy" id="273119"/>
    <lineage>
        <taxon>Bacteria</taxon>
        <taxon>Bacillati</taxon>
        <taxon>Mycoplasmatota</taxon>
        <taxon>Mycoplasmoidales</taxon>
        <taxon>Mycoplasmoidaceae</taxon>
        <taxon>Ureaplasma</taxon>
    </lineage>
</organism>
<feature type="chain" id="PRO_0000070926" description="Chaperone protein DnaJ">
    <location>
        <begin position="1"/>
        <end position="375"/>
    </location>
</feature>
<feature type="domain" description="J" evidence="1">
    <location>
        <begin position="5"/>
        <end position="68"/>
    </location>
</feature>
<feature type="repeat" description="CXXCXGXG motif">
    <location>
        <begin position="148"/>
        <end position="155"/>
    </location>
</feature>
<feature type="repeat" description="CXXCXGXG motif">
    <location>
        <begin position="165"/>
        <end position="172"/>
    </location>
</feature>
<feature type="repeat" description="CXXCXGXG motif">
    <location>
        <begin position="191"/>
        <end position="198"/>
    </location>
</feature>
<feature type="repeat" description="CXXCXGXG motif">
    <location>
        <begin position="205"/>
        <end position="212"/>
    </location>
</feature>
<feature type="zinc finger region" description="CR-type" evidence="1">
    <location>
        <begin position="135"/>
        <end position="217"/>
    </location>
</feature>
<feature type="binding site" evidence="1">
    <location>
        <position position="148"/>
    </location>
    <ligand>
        <name>Zn(2+)</name>
        <dbReference type="ChEBI" id="CHEBI:29105"/>
        <label>1</label>
    </ligand>
</feature>
<feature type="binding site" evidence="1">
    <location>
        <position position="151"/>
    </location>
    <ligand>
        <name>Zn(2+)</name>
        <dbReference type="ChEBI" id="CHEBI:29105"/>
        <label>1</label>
    </ligand>
</feature>
<feature type="binding site" evidence="1">
    <location>
        <position position="165"/>
    </location>
    <ligand>
        <name>Zn(2+)</name>
        <dbReference type="ChEBI" id="CHEBI:29105"/>
        <label>2</label>
    </ligand>
</feature>
<feature type="binding site" evidence="1">
    <location>
        <position position="168"/>
    </location>
    <ligand>
        <name>Zn(2+)</name>
        <dbReference type="ChEBI" id="CHEBI:29105"/>
        <label>2</label>
    </ligand>
</feature>
<feature type="binding site" evidence="1">
    <location>
        <position position="191"/>
    </location>
    <ligand>
        <name>Zn(2+)</name>
        <dbReference type="ChEBI" id="CHEBI:29105"/>
        <label>2</label>
    </ligand>
</feature>
<feature type="binding site" evidence="1">
    <location>
        <position position="194"/>
    </location>
    <ligand>
        <name>Zn(2+)</name>
        <dbReference type="ChEBI" id="CHEBI:29105"/>
        <label>2</label>
    </ligand>
</feature>
<feature type="binding site" evidence="1">
    <location>
        <position position="205"/>
    </location>
    <ligand>
        <name>Zn(2+)</name>
        <dbReference type="ChEBI" id="CHEBI:29105"/>
        <label>1</label>
    </ligand>
</feature>
<feature type="binding site" evidence="1">
    <location>
        <position position="208"/>
    </location>
    <ligand>
        <name>Zn(2+)</name>
        <dbReference type="ChEBI" id="CHEBI:29105"/>
        <label>1</label>
    </ligand>
</feature>
<accession>Q9PQ82</accession>
<protein>
    <recommendedName>
        <fullName evidence="1">Chaperone protein DnaJ</fullName>
    </recommendedName>
</protein>
<proteinExistence type="inferred from homology"/>
<comment type="function">
    <text evidence="1">Participates actively in the response to hyperosmotic and heat shock by preventing the aggregation of stress-denatured proteins and by disaggregating proteins, also in an autonomous, DnaK-independent fashion. Unfolded proteins bind initially to DnaJ; upon interaction with the DnaJ-bound protein, DnaK hydrolyzes its bound ATP, resulting in the formation of a stable complex. GrpE releases ADP from DnaK; ATP binding to DnaK triggers the release of the substrate protein, thus completing the reaction cycle. Several rounds of ATP-dependent interactions between DnaJ, DnaK and GrpE are required for fully efficient folding. Also involved, together with DnaK and GrpE, in the DNA replication of plasmids through activation of initiation proteins.</text>
</comment>
<comment type="cofactor">
    <cofactor evidence="1">
        <name>Zn(2+)</name>
        <dbReference type="ChEBI" id="CHEBI:29105"/>
    </cofactor>
    <text evidence="1">Binds 2 Zn(2+) ions per monomer.</text>
</comment>
<comment type="subunit">
    <text evidence="1">Homodimer.</text>
</comment>
<comment type="subcellular location">
    <subcellularLocation>
        <location evidence="1">Cytoplasm</location>
    </subcellularLocation>
</comment>
<comment type="domain">
    <text evidence="1">The J domain is necessary and sufficient to stimulate DnaK ATPase activity. Zinc center 1 plays an important role in the autonomous, DnaK-independent chaperone activity of DnaJ. Zinc center 2 is essential for interaction with DnaK and for DnaJ activity.</text>
</comment>
<comment type="similarity">
    <text evidence="1">Belongs to the DnaJ family.</text>
</comment>
<name>DNAJ_UREPA</name>